<accession>A1TZ36</accession>
<dbReference type="EC" id="3.1.3.77" evidence="1"/>
<dbReference type="EMBL" id="CP000514">
    <property type="protein sequence ID" value="ABM18005.1"/>
    <property type="molecule type" value="Genomic_DNA"/>
</dbReference>
<dbReference type="RefSeq" id="WP_011784425.1">
    <property type="nucleotide sequence ID" value="NC_008740.1"/>
</dbReference>
<dbReference type="SMR" id="A1TZ36"/>
<dbReference type="STRING" id="351348.Maqu_0909"/>
<dbReference type="KEGG" id="maq:Maqu_0909"/>
<dbReference type="eggNOG" id="COG4229">
    <property type="taxonomic scope" value="Bacteria"/>
</dbReference>
<dbReference type="HOGENOM" id="CLU_023273_0_0_6"/>
<dbReference type="OrthoDB" id="9797416at2"/>
<dbReference type="UniPathway" id="UPA00904">
    <property type="reaction ID" value="UER00876"/>
</dbReference>
<dbReference type="UniPathway" id="UPA00904">
    <property type="reaction ID" value="UER00877"/>
</dbReference>
<dbReference type="Proteomes" id="UP000000998">
    <property type="component" value="Chromosome"/>
</dbReference>
<dbReference type="GO" id="GO:0043715">
    <property type="term" value="F:2,3-diketo-5-methylthiopentyl-1-phosphate enolase activity"/>
    <property type="evidence" value="ECO:0007669"/>
    <property type="project" value="UniProtKB-UniRule"/>
</dbReference>
<dbReference type="GO" id="GO:0043716">
    <property type="term" value="F:2-hydroxy-3-keto-5-methylthiopentenyl-1-phosphate phosphatase activity"/>
    <property type="evidence" value="ECO:0007669"/>
    <property type="project" value="UniProtKB-UniRule"/>
</dbReference>
<dbReference type="GO" id="GO:0043874">
    <property type="term" value="F:acireductone synthase activity"/>
    <property type="evidence" value="ECO:0007669"/>
    <property type="project" value="UniProtKB-EC"/>
</dbReference>
<dbReference type="GO" id="GO:0000287">
    <property type="term" value="F:magnesium ion binding"/>
    <property type="evidence" value="ECO:0007669"/>
    <property type="project" value="UniProtKB-UniRule"/>
</dbReference>
<dbReference type="GO" id="GO:0019509">
    <property type="term" value="P:L-methionine salvage from methylthioadenosine"/>
    <property type="evidence" value="ECO:0007669"/>
    <property type="project" value="UniProtKB-UniRule"/>
</dbReference>
<dbReference type="CDD" id="cd01629">
    <property type="entry name" value="HAD_EP"/>
    <property type="match status" value="1"/>
</dbReference>
<dbReference type="FunFam" id="3.40.50.1000:FF:000079">
    <property type="entry name" value="Enolase-phosphatase E1"/>
    <property type="match status" value="1"/>
</dbReference>
<dbReference type="Gene3D" id="1.10.720.60">
    <property type="match status" value="1"/>
</dbReference>
<dbReference type="Gene3D" id="3.40.50.1000">
    <property type="entry name" value="HAD superfamily/HAD-like"/>
    <property type="match status" value="1"/>
</dbReference>
<dbReference type="HAMAP" id="MF_01681">
    <property type="entry name" value="Salvage_MtnC"/>
    <property type="match status" value="1"/>
</dbReference>
<dbReference type="InterPro" id="IPR023943">
    <property type="entry name" value="Enolase-ppase_E1"/>
</dbReference>
<dbReference type="InterPro" id="IPR036412">
    <property type="entry name" value="HAD-like_sf"/>
</dbReference>
<dbReference type="InterPro" id="IPR006439">
    <property type="entry name" value="HAD-SF_hydro_IA"/>
</dbReference>
<dbReference type="InterPro" id="IPR023214">
    <property type="entry name" value="HAD_sf"/>
</dbReference>
<dbReference type="NCBIfam" id="TIGR01691">
    <property type="entry name" value="enolase-ppase"/>
    <property type="match status" value="1"/>
</dbReference>
<dbReference type="NCBIfam" id="TIGR01549">
    <property type="entry name" value="HAD-SF-IA-v1"/>
    <property type="match status" value="1"/>
</dbReference>
<dbReference type="PANTHER" id="PTHR20371">
    <property type="entry name" value="ENOLASE-PHOSPHATASE E1"/>
    <property type="match status" value="1"/>
</dbReference>
<dbReference type="PANTHER" id="PTHR20371:SF1">
    <property type="entry name" value="ENOLASE-PHOSPHATASE E1"/>
    <property type="match status" value="1"/>
</dbReference>
<dbReference type="Pfam" id="PF00702">
    <property type="entry name" value="Hydrolase"/>
    <property type="match status" value="1"/>
</dbReference>
<dbReference type="SFLD" id="SFLDG01133">
    <property type="entry name" value="C1.5.4:_Enolase-phosphatase_Li"/>
    <property type="match status" value="1"/>
</dbReference>
<dbReference type="SFLD" id="SFLDF00044">
    <property type="entry name" value="enolase-phosphatase"/>
    <property type="match status" value="1"/>
</dbReference>
<dbReference type="SUPFAM" id="SSF56784">
    <property type="entry name" value="HAD-like"/>
    <property type="match status" value="1"/>
</dbReference>
<name>MTNC_MARN8</name>
<comment type="function">
    <text evidence="1">Bifunctional enzyme that catalyzes the enolization of 2,3-diketo-5-methylthiopentyl-1-phosphate (DK-MTP-1-P) into the intermediate 2-hydroxy-3-keto-5-methylthiopentenyl-1-phosphate (HK-MTPenyl-1-P), which is then dephosphorylated to form the acireductone 1,2-dihydroxy-3-keto-5-methylthiopentene (DHK-MTPene).</text>
</comment>
<comment type="catalytic activity">
    <reaction evidence="1">
        <text>5-methylsulfanyl-2,3-dioxopentyl phosphate + H2O = 1,2-dihydroxy-5-(methylsulfanyl)pent-1-en-3-one + phosphate</text>
        <dbReference type="Rhea" id="RHEA:21700"/>
        <dbReference type="ChEBI" id="CHEBI:15377"/>
        <dbReference type="ChEBI" id="CHEBI:43474"/>
        <dbReference type="ChEBI" id="CHEBI:49252"/>
        <dbReference type="ChEBI" id="CHEBI:58828"/>
        <dbReference type="EC" id="3.1.3.77"/>
    </reaction>
</comment>
<comment type="cofactor">
    <cofactor evidence="1">
        <name>Mg(2+)</name>
        <dbReference type="ChEBI" id="CHEBI:18420"/>
    </cofactor>
    <text evidence="1">Binds 1 Mg(2+) ion per subunit.</text>
</comment>
<comment type="pathway">
    <text evidence="1">Amino-acid biosynthesis; L-methionine biosynthesis via salvage pathway; L-methionine from S-methyl-5-thio-alpha-D-ribose 1-phosphate: step 3/6.</text>
</comment>
<comment type="pathway">
    <text evidence="1">Amino-acid biosynthesis; L-methionine biosynthesis via salvage pathway; L-methionine from S-methyl-5-thio-alpha-D-ribose 1-phosphate: step 4/6.</text>
</comment>
<comment type="subunit">
    <text evidence="1">Monomer.</text>
</comment>
<comment type="similarity">
    <text evidence="1">Belongs to the HAD-like hydrolase superfamily. MasA/MtnC family.</text>
</comment>
<feature type="chain" id="PRO_0000357381" description="Enolase-phosphatase E1">
    <location>
        <begin position="1"/>
        <end position="230"/>
    </location>
</feature>
<gene>
    <name evidence="1" type="primary">mtnC</name>
    <name type="ordered locus">Maqu_0909</name>
</gene>
<reference key="1">
    <citation type="journal article" date="2011" name="Appl. Environ. Microbiol.">
        <title>Genomic potential of Marinobacter aquaeolei, a biogeochemical 'opportunitroph'.</title>
        <authorList>
            <person name="Singer E."/>
            <person name="Webb E.A."/>
            <person name="Nelson W.C."/>
            <person name="Heidelberg J.F."/>
            <person name="Ivanova N."/>
            <person name="Pati A."/>
            <person name="Edwards K.J."/>
        </authorList>
    </citation>
    <scope>NUCLEOTIDE SEQUENCE [LARGE SCALE GENOMIC DNA]</scope>
    <source>
        <strain>ATCC 700491 / DSM 11845 / VT8</strain>
    </source>
</reference>
<proteinExistence type="inferred from homology"/>
<keyword id="KW-0028">Amino-acid biosynthesis</keyword>
<keyword id="KW-0378">Hydrolase</keyword>
<keyword id="KW-0460">Magnesium</keyword>
<keyword id="KW-0479">Metal-binding</keyword>
<keyword id="KW-0486">Methionine biosynthesis</keyword>
<protein>
    <recommendedName>
        <fullName evidence="1">Enolase-phosphatase E1</fullName>
        <ecNumber evidence="1">3.1.3.77</ecNumber>
    </recommendedName>
    <alternativeName>
        <fullName evidence="1">2,3-diketo-5-methylthio-1-phosphopentane phosphatase</fullName>
    </alternativeName>
</protein>
<sequence>MIRVILTDIEGTTSSISFVHDVLFPYASEHLPEFIRANHHTLPAVAEQLVRVAEISGTDRKDIDGLINVLQEWIAEDRKEGALKALQGMVWEQGYHSGELKGHIYPDAADYLKRWHDRGLRLFVYSSGSVKAQKLIFGHSNEGDFTVFFSGYFDTAVGGKKESQSYRNILAELGVDAGTVLFLSDVEEELRAAEEAGLKTAWLVREGELPDTARVVARDFSEVDALLRKR</sequence>
<organism>
    <name type="scientific">Marinobacter nauticus (strain ATCC 700491 / DSM 11845 / VT8)</name>
    <name type="common">Marinobacter aquaeolei</name>
    <dbReference type="NCBI Taxonomy" id="351348"/>
    <lineage>
        <taxon>Bacteria</taxon>
        <taxon>Pseudomonadati</taxon>
        <taxon>Pseudomonadota</taxon>
        <taxon>Gammaproteobacteria</taxon>
        <taxon>Pseudomonadales</taxon>
        <taxon>Marinobacteraceae</taxon>
        <taxon>Marinobacter</taxon>
    </lineage>
</organism>
<evidence type="ECO:0000255" key="1">
    <source>
        <dbReference type="HAMAP-Rule" id="MF_01681"/>
    </source>
</evidence>